<accession>Q9PD96</accession>
<reference key="1">
    <citation type="journal article" date="2000" name="Nature">
        <title>The genome sequence of the plant pathogen Xylella fastidiosa.</title>
        <authorList>
            <person name="Simpson A.J.G."/>
            <person name="Reinach F.C."/>
            <person name="Arruda P."/>
            <person name="Abreu F.A."/>
            <person name="Acencio M."/>
            <person name="Alvarenga R."/>
            <person name="Alves L.M.C."/>
            <person name="Araya J.E."/>
            <person name="Baia G.S."/>
            <person name="Baptista C.S."/>
            <person name="Barros M.H."/>
            <person name="Bonaccorsi E.D."/>
            <person name="Bordin S."/>
            <person name="Bove J.M."/>
            <person name="Briones M.R.S."/>
            <person name="Bueno M.R.P."/>
            <person name="Camargo A.A."/>
            <person name="Camargo L.E.A."/>
            <person name="Carraro D.M."/>
            <person name="Carrer H."/>
            <person name="Colauto N.B."/>
            <person name="Colombo C."/>
            <person name="Costa F.F."/>
            <person name="Costa M.C.R."/>
            <person name="Costa-Neto C.M."/>
            <person name="Coutinho L.L."/>
            <person name="Cristofani M."/>
            <person name="Dias-Neto E."/>
            <person name="Docena C."/>
            <person name="El-Dorry H."/>
            <person name="Facincani A.P."/>
            <person name="Ferreira A.J.S."/>
            <person name="Ferreira V.C.A."/>
            <person name="Ferro J.A."/>
            <person name="Fraga J.S."/>
            <person name="Franca S.C."/>
            <person name="Franco M.C."/>
            <person name="Frohme M."/>
            <person name="Furlan L.R."/>
            <person name="Garnier M."/>
            <person name="Goldman G.H."/>
            <person name="Goldman M.H.S."/>
            <person name="Gomes S.L."/>
            <person name="Gruber A."/>
            <person name="Ho P.L."/>
            <person name="Hoheisel J.D."/>
            <person name="Junqueira M.L."/>
            <person name="Kemper E.L."/>
            <person name="Kitajima J.P."/>
            <person name="Krieger J.E."/>
            <person name="Kuramae E.E."/>
            <person name="Laigret F."/>
            <person name="Lambais M.R."/>
            <person name="Leite L.C.C."/>
            <person name="Lemos E.G.M."/>
            <person name="Lemos M.V.F."/>
            <person name="Lopes S.A."/>
            <person name="Lopes C.R."/>
            <person name="Machado J.A."/>
            <person name="Machado M.A."/>
            <person name="Madeira A.M.B.N."/>
            <person name="Madeira H.M.F."/>
            <person name="Marino C.L."/>
            <person name="Marques M.V."/>
            <person name="Martins E.A.L."/>
            <person name="Martins E.M.F."/>
            <person name="Matsukuma A.Y."/>
            <person name="Menck C.F.M."/>
            <person name="Miracca E.C."/>
            <person name="Miyaki C.Y."/>
            <person name="Monteiro-Vitorello C.B."/>
            <person name="Moon D.H."/>
            <person name="Nagai M.A."/>
            <person name="Nascimento A.L.T.O."/>
            <person name="Netto L.E.S."/>
            <person name="Nhani A. Jr."/>
            <person name="Nobrega F.G."/>
            <person name="Nunes L.R."/>
            <person name="Oliveira M.A."/>
            <person name="de Oliveira M.C."/>
            <person name="de Oliveira R.C."/>
            <person name="Palmieri D.A."/>
            <person name="Paris A."/>
            <person name="Peixoto B.R."/>
            <person name="Pereira G.A.G."/>
            <person name="Pereira H.A. Jr."/>
            <person name="Pesquero J.B."/>
            <person name="Quaggio R.B."/>
            <person name="Roberto P.G."/>
            <person name="Rodrigues V."/>
            <person name="de Rosa A.J.M."/>
            <person name="de Rosa V.E. Jr."/>
            <person name="de Sa R.G."/>
            <person name="Santelli R.V."/>
            <person name="Sawasaki H.E."/>
            <person name="da Silva A.C.R."/>
            <person name="da Silva A.M."/>
            <person name="da Silva F.R."/>
            <person name="Silva W.A. Jr."/>
            <person name="da Silveira J.F."/>
            <person name="Silvestri M.L.Z."/>
            <person name="Siqueira W.J."/>
            <person name="de Souza A.A."/>
            <person name="de Souza A.P."/>
            <person name="Terenzi M.F."/>
            <person name="Truffi D."/>
            <person name="Tsai S.M."/>
            <person name="Tsuhako M.H."/>
            <person name="Vallada H."/>
            <person name="Van Sluys M.A."/>
            <person name="Verjovski-Almeida S."/>
            <person name="Vettore A.L."/>
            <person name="Zago M.A."/>
            <person name="Zatz M."/>
            <person name="Meidanis J."/>
            <person name="Setubal J.C."/>
        </authorList>
    </citation>
    <scope>NUCLEOTIDE SEQUENCE [LARGE SCALE GENOMIC DNA]</scope>
    <source>
        <strain>9a5c</strain>
    </source>
</reference>
<reference key="2">
    <citation type="journal article" date="2002" name="Nature">
        <title>Filamentous phage integration requires the host recombinases XerC and XerD.</title>
        <authorList>
            <person name="Huber K.E."/>
            <person name="Waldor M.K."/>
        </authorList>
    </citation>
    <scope>BACTERIOPHAGE INFECTION</scope>
</reference>
<keyword id="KW-0131">Cell cycle</keyword>
<keyword id="KW-0132">Cell division</keyword>
<keyword id="KW-0159">Chromosome partition</keyword>
<keyword id="KW-0963">Cytoplasm</keyword>
<keyword id="KW-0229">DNA integration</keyword>
<keyword id="KW-0233">DNA recombination</keyword>
<keyword id="KW-0238">DNA-binding</keyword>
<name>XERC_XYLFA</name>
<proteinExistence type="inferred from homology"/>
<dbReference type="EMBL" id="AE003849">
    <property type="protein sequence ID" value="AAF84292.1"/>
    <property type="molecule type" value="Genomic_DNA"/>
</dbReference>
<dbReference type="PIR" id="F82677">
    <property type="entry name" value="F82677"/>
</dbReference>
<dbReference type="RefSeq" id="WP_010893984.1">
    <property type="nucleotide sequence ID" value="NC_002488.3"/>
</dbReference>
<dbReference type="SMR" id="Q9PD96"/>
<dbReference type="STRING" id="160492.XF_1483"/>
<dbReference type="KEGG" id="xfa:XF_1483"/>
<dbReference type="PATRIC" id="fig|160492.11.peg.1564"/>
<dbReference type="eggNOG" id="COG4973">
    <property type="taxonomic scope" value="Bacteria"/>
</dbReference>
<dbReference type="HOGENOM" id="CLU_027562_9_0_6"/>
<dbReference type="Proteomes" id="UP000000812">
    <property type="component" value="Chromosome"/>
</dbReference>
<dbReference type="GO" id="GO:0005737">
    <property type="term" value="C:cytoplasm"/>
    <property type="evidence" value="ECO:0007669"/>
    <property type="project" value="UniProtKB-SubCell"/>
</dbReference>
<dbReference type="GO" id="GO:0003677">
    <property type="term" value="F:DNA binding"/>
    <property type="evidence" value="ECO:0007669"/>
    <property type="project" value="UniProtKB-KW"/>
</dbReference>
<dbReference type="GO" id="GO:0009037">
    <property type="term" value="F:tyrosine-based site-specific recombinase activity"/>
    <property type="evidence" value="ECO:0007669"/>
    <property type="project" value="UniProtKB-UniRule"/>
</dbReference>
<dbReference type="GO" id="GO:0051301">
    <property type="term" value="P:cell division"/>
    <property type="evidence" value="ECO:0007669"/>
    <property type="project" value="UniProtKB-KW"/>
</dbReference>
<dbReference type="GO" id="GO:0007059">
    <property type="term" value="P:chromosome segregation"/>
    <property type="evidence" value="ECO:0007669"/>
    <property type="project" value="UniProtKB-UniRule"/>
</dbReference>
<dbReference type="GO" id="GO:0006313">
    <property type="term" value="P:DNA transposition"/>
    <property type="evidence" value="ECO:0007669"/>
    <property type="project" value="UniProtKB-UniRule"/>
</dbReference>
<dbReference type="CDD" id="cd00798">
    <property type="entry name" value="INT_XerDC_C"/>
    <property type="match status" value="1"/>
</dbReference>
<dbReference type="Gene3D" id="1.10.150.130">
    <property type="match status" value="1"/>
</dbReference>
<dbReference type="Gene3D" id="1.10.443.10">
    <property type="entry name" value="Intergrase catalytic core"/>
    <property type="match status" value="1"/>
</dbReference>
<dbReference type="HAMAP" id="MF_01808">
    <property type="entry name" value="Recomb_XerC_XerD"/>
    <property type="match status" value="1"/>
</dbReference>
<dbReference type="InterPro" id="IPR044068">
    <property type="entry name" value="CB"/>
</dbReference>
<dbReference type="InterPro" id="IPR011010">
    <property type="entry name" value="DNA_brk_join_enz"/>
</dbReference>
<dbReference type="InterPro" id="IPR013762">
    <property type="entry name" value="Integrase-like_cat_sf"/>
</dbReference>
<dbReference type="InterPro" id="IPR002104">
    <property type="entry name" value="Integrase_catalytic"/>
</dbReference>
<dbReference type="InterPro" id="IPR010998">
    <property type="entry name" value="Integrase_recombinase_N"/>
</dbReference>
<dbReference type="InterPro" id="IPR004107">
    <property type="entry name" value="Integrase_SAM-like_N"/>
</dbReference>
<dbReference type="InterPro" id="IPR011931">
    <property type="entry name" value="Recomb_XerC"/>
</dbReference>
<dbReference type="InterPro" id="IPR023009">
    <property type="entry name" value="Tyrosine_recombinase_XerC/XerD"/>
</dbReference>
<dbReference type="InterPro" id="IPR050090">
    <property type="entry name" value="Tyrosine_recombinase_XerCD"/>
</dbReference>
<dbReference type="NCBIfam" id="NF001399">
    <property type="entry name" value="PRK00283.1"/>
    <property type="match status" value="1"/>
</dbReference>
<dbReference type="NCBIfam" id="TIGR02224">
    <property type="entry name" value="recomb_XerC"/>
    <property type="match status" value="1"/>
</dbReference>
<dbReference type="PANTHER" id="PTHR30349">
    <property type="entry name" value="PHAGE INTEGRASE-RELATED"/>
    <property type="match status" value="1"/>
</dbReference>
<dbReference type="PANTHER" id="PTHR30349:SF81">
    <property type="entry name" value="TYROSINE RECOMBINASE XERC"/>
    <property type="match status" value="1"/>
</dbReference>
<dbReference type="Pfam" id="PF02899">
    <property type="entry name" value="Phage_int_SAM_1"/>
    <property type="match status" value="1"/>
</dbReference>
<dbReference type="Pfam" id="PF00589">
    <property type="entry name" value="Phage_integrase"/>
    <property type="match status" value="1"/>
</dbReference>
<dbReference type="SUPFAM" id="SSF56349">
    <property type="entry name" value="DNA breaking-rejoining enzymes"/>
    <property type="match status" value="1"/>
</dbReference>
<dbReference type="PROSITE" id="PS51900">
    <property type="entry name" value="CB"/>
    <property type="match status" value="1"/>
</dbReference>
<dbReference type="PROSITE" id="PS51898">
    <property type="entry name" value="TYR_RECOMBINASE"/>
    <property type="match status" value="1"/>
</dbReference>
<gene>
    <name type="primary">xerC</name>
    <name type="ordered locus">XF_1483</name>
</gene>
<feature type="chain" id="PRO_0000095349" description="Tyrosine recombinase XerC">
    <location>
        <begin position="1"/>
        <end position="294"/>
    </location>
</feature>
<feature type="domain" description="Core-binding (CB)" evidence="3">
    <location>
        <begin position="1"/>
        <end position="85"/>
    </location>
</feature>
<feature type="domain" description="Tyr recombinase" evidence="2">
    <location>
        <begin position="106"/>
        <end position="283"/>
    </location>
</feature>
<feature type="active site" evidence="2">
    <location>
        <position position="145"/>
    </location>
</feature>
<feature type="active site" evidence="2">
    <location>
        <position position="169"/>
    </location>
</feature>
<feature type="active site" evidence="2">
    <location>
        <position position="235"/>
    </location>
</feature>
<feature type="active site" evidence="2">
    <location>
        <position position="238"/>
    </location>
</feature>
<feature type="active site" evidence="2">
    <location>
        <position position="261"/>
    </location>
</feature>
<feature type="active site" description="O-(3'-phospho-DNA)-tyrosine intermediate" evidence="2">
    <location>
        <position position="270"/>
    </location>
</feature>
<comment type="function">
    <text evidence="1">Site-specific tyrosine recombinase, which acts by catalyzing the cutting and rejoining of the recombining DNA molecules. The XerC-XerD complex is essential to convert dimers of the bacterial chromosome into monomers to permit their segregation at cell division. It also contributes to the segregational stability of plasmids (By similarity).</text>
</comment>
<comment type="subunit">
    <text evidence="1">Forms a cyclic heterotetrameric complex composed of two molecules of XerC and two molecules of XerD.</text>
</comment>
<comment type="subcellular location">
    <subcellularLocation>
        <location evidence="1">Cytoplasm</location>
    </subcellularLocation>
</comment>
<comment type="miscellaneous">
    <text>During infection by the bacteriophage Xf-phi-f1, it may be required by the bacteriophage, which may use host proteins XerC and XerD to integrate the bacterial genome.</text>
</comment>
<comment type="similarity">
    <text evidence="4">Belongs to the 'phage' integrase family. XerC subfamily.</text>
</comment>
<organism>
    <name type="scientific">Xylella fastidiosa (strain 9a5c)</name>
    <dbReference type="NCBI Taxonomy" id="160492"/>
    <lineage>
        <taxon>Bacteria</taxon>
        <taxon>Pseudomonadati</taxon>
        <taxon>Pseudomonadota</taxon>
        <taxon>Gammaproteobacteria</taxon>
        <taxon>Lysobacterales</taxon>
        <taxon>Lysobacteraceae</taxon>
        <taxon>Xylella</taxon>
    </lineage>
</organism>
<evidence type="ECO:0000250" key="1"/>
<evidence type="ECO:0000255" key="2">
    <source>
        <dbReference type="PROSITE-ProRule" id="PRU01246"/>
    </source>
</evidence>
<evidence type="ECO:0000255" key="3">
    <source>
        <dbReference type="PROSITE-ProRule" id="PRU01248"/>
    </source>
</evidence>
<evidence type="ECO:0000305" key="4"/>
<protein>
    <recommendedName>
        <fullName>Tyrosine recombinase XerC</fullName>
    </recommendedName>
</protein>
<sequence>MSRLVDDFFAFLHVERGMSAHTLDAYRRDIGALIAWGVQQAVGEVVALDRAQLQAFVAAEHRRGLSAKSLQRRLSACRGFYAWLVKRGHIAINPAAGLRAPKALRKLPRILDADEAVSFVQIPTDTPLGLRDRALLELFYSSGLRLSELCGLRWGGVDLDAGLVSVLGKGSRQRVVPVGSYALSALREWCASSGGGAQQPVFPGRYGGPISARAVQVRIKQLAQRQGMAKHVHPHMLRHSFASHLLESSGDLRGVQELLGHADITTTQIYTHLDFQYLSKVYDAAHPRARRKAR</sequence>